<organism>
    <name type="scientific">Cricetulus griseus</name>
    <name type="common">Chinese hamster</name>
    <name type="synonym">Cricetulus barabensis griseus</name>
    <dbReference type="NCBI Taxonomy" id="10029"/>
    <lineage>
        <taxon>Eukaryota</taxon>
        <taxon>Metazoa</taxon>
        <taxon>Chordata</taxon>
        <taxon>Craniata</taxon>
        <taxon>Vertebrata</taxon>
        <taxon>Euteleostomi</taxon>
        <taxon>Mammalia</taxon>
        <taxon>Eutheria</taxon>
        <taxon>Euarchontoglires</taxon>
        <taxon>Glires</taxon>
        <taxon>Rodentia</taxon>
        <taxon>Myomorpha</taxon>
        <taxon>Muroidea</taxon>
        <taxon>Cricetidae</taxon>
        <taxon>Cricetinae</taxon>
        <taxon>Cricetulus</taxon>
    </lineage>
</organism>
<protein>
    <recommendedName>
        <fullName>Lysosome-associated membrane glycoprotein 1</fullName>
        <shortName>LAMP-1</shortName>
        <shortName>Lysosome-associated membrane protein 1</shortName>
    </recommendedName>
    <alternativeName>
        <fullName>CD107 antigen-like family member A</fullName>
    </alternativeName>
    <alternativeName>
        <fullName>Lysosomal membrane glycoprotein A</fullName>
        <shortName>LGP-A</shortName>
    </alternativeName>
    <cdAntigenName>CD107a</cdAntigenName>
</protein>
<reference key="1">
    <citation type="journal article" date="1995" name="Cell. Mol. Biol. Res.">
        <title>Cell surface accumulation of overexpressed hamster lysosomal membrane glycoproteins.</title>
        <authorList>
            <person name="Uthayakumar S."/>
            <person name="Granger B.L."/>
        </authorList>
    </citation>
    <scope>NUCLEOTIDE SEQUENCE [MRNA]</scope>
</reference>
<evidence type="ECO:0000250" key="1">
    <source>
        <dbReference type="UniProtKB" id="P05300"/>
    </source>
</evidence>
<evidence type="ECO:0000250" key="2">
    <source>
        <dbReference type="UniProtKB" id="P11279"/>
    </source>
</evidence>
<evidence type="ECO:0000250" key="3">
    <source>
        <dbReference type="UniProtKB" id="P14562"/>
    </source>
</evidence>
<evidence type="ECO:0000255" key="4"/>
<evidence type="ECO:0000255" key="5">
    <source>
        <dbReference type="PROSITE-ProRule" id="PRU00740"/>
    </source>
</evidence>
<evidence type="ECO:0000256" key="6">
    <source>
        <dbReference type="SAM" id="MobiDB-lite"/>
    </source>
</evidence>
<feature type="signal peptide" evidence="3">
    <location>
        <begin position="1"/>
        <end position="21"/>
    </location>
</feature>
<feature type="chain" id="PRO_0000017108" description="Lysosome-associated membrane glycoprotein 1">
    <location>
        <begin position="22"/>
        <end position="407"/>
    </location>
</feature>
<feature type="topological domain" description="Lumenal" evidence="4">
    <location>
        <begin position="22"/>
        <end position="371"/>
    </location>
</feature>
<feature type="transmembrane region" description="Helical" evidence="5">
    <location>
        <begin position="372"/>
        <end position="395"/>
    </location>
</feature>
<feature type="topological domain" description="Cytoplasmic" evidence="5">
    <location>
        <begin position="396"/>
        <end position="407"/>
    </location>
</feature>
<feature type="region of interest" description="First lumenal domain">
    <location>
        <begin position="22"/>
        <end position="189"/>
    </location>
</feature>
<feature type="region of interest" description="Disordered" evidence="6">
    <location>
        <begin position="183"/>
        <end position="206"/>
    </location>
</feature>
<feature type="region of interest" description="Hinge">
    <location>
        <begin position="190"/>
        <end position="219"/>
    </location>
</feature>
<feature type="region of interest" description="Second lumenal domain">
    <location>
        <begin position="220"/>
        <end position="371"/>
    </location>
</feature>
<feature type="compositionally biased region" description="Pro residues" evidence="6">
    <location>
        <begin position="194"/>
        <end position="206"/>
    </location>
</feature>
<feature type="glycosylation site" description="N-linked (GlcNAc...) asparagine" evidence="4">
    <location>
        <position position="32"/>
    </location>
</feature>
<feature type="glycosylation site" description="N-linked (GlcNAc...) asparagine" evidence="4">
    <location>
        <position position="40"/>
    </location>
</feature>
<feature type="glycosylation site" description="N-linked (GlcNAc...) asparagine" evidence="4">
    <location>
        <position position="57"/>
    </location>
</feature>
<feature type="glycosylation site" description="N-linked (GlcNAc...) asparagine" evidence="4">
    <location>
        <position position="72"/>
    </location>
</feature>
<feature type="glycosylation site" description="N-linked (GlcNAc...) asparagine" evidence="4">
    <location>
        <position position="79"/>
    </location>
</feature>
<feature type="glycosylation site" description="N-linked (GlcNAc...) asparagine" evidence="4">
    <location>
        <position position="98"/>
    </location>
</feature>
<feature type="glycosylation site" description="N-linked (GlcNAc...) asparagine" evidence="4">
    <location>
        <position position="102"/>
    </location>
</feature>
<feature type="glycosylation site" description="N-linked (GlcNAc...) asparagine" evidence="4">
    <location>
        <position position="116"/>
    </location>
</feature>
<feature type="glycosylation site" description="N-linked (GlcNAc...) asparagine" evidence="4">
    <location>
        <position position="125"/>
    </location>
</feature>
<feature type="glycosylation site" description="N-linked (GlcNAc...) asparagine" evidence="4">
    <location>
        <position position="145"/>
    </location>
</feature>
<feature type="glycosylation site" description="N-linked (GlcNAc...) asparagine" evidence="4">
    <location>
        <position position="160"/>
    </location>
</feature>
<feature type="glycosylation site" description="N-linked (GlcNAc...) asparagine" evidence="4">
    <location>
        <position position="178"/>
    </location>
</feature>
<feature type="glycosylation site" description="N-linked (GlcNAc...) asparagine" evidence="4">
    <location>
        <position position="215"/>
    </location>
</feature>
<feature type="glycosylation site" description="N-linked (GlcNAc...) asparagine" evidence="4">
    <location>
        <position position="220"/>
    </location>
</feature>
<feature type="glycosylation site" description="N-linked (GlcNAc...) asparagine" evidence="4">
    <location>
        <position position="233"/>
    </location>
</feature>
<feature type="glycosylation site" description="N-linked (GlcNAc...) asparagine" evidence="4">
    <location>
        <position position="241"/>
    </location>
</feature>
<feature type="glycosylation site" description="N-linked (GlcNAc...) asparagine" evidence="4">
    <location>
        <position position="253"/>
    </location>
</feature>
<feature type="glycosylation site" description="N-linked (GlcNAc...) asparagine" evidence="4">
    <location>
        <position position="283"/>
    </location>
</feature>
<feature type="glycosylation site" description="N-linked (GlcNAc...) asparagine" evidence="4">
    <location>
        <position position="297"/>
    </location>
</feature>
<feature type="glycosylation site" description="N-linked (GlcNAc...) asparagine" evidence="4">
    <location>
        <position position="304"/>
    </location>
</feature>
<feature type="glycosylation site" description="N-linked (GlcNAc...) asparagine" evidence="4">
    <location>
        <position position="312"/>
    </location>
</feature>
<feature type="disulfide bond" evidence="5">
    <location>
        <begin position="36"/>
        <end position="75"/>
    </location>
</feature>
<feature type="disulfide bond" evidence="5">
    <location>
        <begin position="150"/>
        <end position="186"/>
    </location>
</feature>
<feature type="disulfide bond" evidence="5">
    <location>
        <begin position="223"/>
        <end position="260"/>
    </location>
</feature>
<feature type="disulfide bond" evidence="5">
    <location>
        <begin position="328"/>
        <end position="365"/>
    </location>
</feature>
<sequence length="407" mass="43787">MAAPGAPRSLLLLLLAGLAHGASALFVVKDSNGTACIMANFSASFFTIYETGHGSKNSTFELPSSAEVLNSNSSCGRENVSEPILTIAFGSGYLLTLNFTRNATRYSVQDMYFAYNLSDTQHFLNASNKGIHSVDSSTDIKADINKTYRCLSAIQVHMGNVTVTLSDATIQAYLLNSNFSKEETRCTQDGPSPTTVPPSPSPPLVPTNPTVIKYNVTGENGTCLLASMALQMNITYMKKDNMTVTRALNISPNDTASGSCSPHVVTLTVESKNSILDLKFGMNGSSSLFFLQEVRLNMTLPDANVSSLMASNQSLRALQATVGNSYKCNTEEHIFVTKEFSLNVFSVQVQAFKVESDRFGSVEECMQDGNNMLIPIAVGGALAGLVLIVLIAYLIGRKRSHAGYQTI</sequence>
<keyword id="KW-1003">Cell membrane</keyword>
<keyword id="KW-1015">Disulfide bond</keyword>
<keyword id="KW-0967">Endosome</keyword>
<keyword id="KW-0325">Glycoprotein</keyword>
<keyword id="KW-0458">Lysosome</keyword>
<keyword id="KW-0472">Membrane</keyword>
<keyword id="KW-0732">Signal</keyword>
<keyword id="KW-0812">Transmembrane</keyword>
<keyword id="KW-1133">Transmembrane helix</keyword>
<accession>P49129</accession>
<gene>
    <name type="primary">LAMP1</name>
    <name type="synonym">LGPA</name>
</gene>
<name>LAMP1_CRIGR</name>
<proteinExistence type="evidence at transcript level"/>
<dbReference type="EMBL" id="L18986">
    <property type="protein sequence ID" value="AAC37682.1"/>
    <property type="molecule type" value="mRNA"/>
</dbReference>
<dbReference type="RefSeq" id="NP_001233759.1">
    <property type="nucleotide sequence ID" value="NM_001246830.1"/>
</dbReference>
<dbReference type="SMR" id="P49129"/>
<dbReference type="IntAct" id="P49129">
    <property type="interactions" value="1"/>
</dbReference>
<dbReference type="MINT" id="P49129"/>
<dbReference type="GlyCosmos" id="P49129">
    <property type="glycosylation" value="21 sites, No reported glycans"/>
</dbReference>
<dbReference type="PaxDb" id="10029-NP_001233759.1"/>
<dbReference type="Ensembl" id="ENSCGRT00001007016.1">
    <property type="protein sequence ID" value="ENSCGRP00001004655.1"/>
    <property type="gene ID" value="ENSCGRG00001005956.1"/>
</dbReference>
<dbReference type="GeneID" id="100689406"/>
<dbReference type="KEGG" id="cge:100689406"/>
<dbReference type="CTD" id="3916"/>
<dbReference type="eggNOG" id="KOG4818">
    <property type="taxonomic scope" value="Eukaryota"/>
</dbReference>
<dbReference type="GeneTree" id="ENSGT00950000182899"/>
<dbReference type="OrthoDB" id="10037042at2759"/>
<dbReference type="Proteomes" id="UP000694386">
    <property type="component" value="Unplaced"/>
</dbReference>
<dbReference type="Proteomes" id="UP001108280">
    <property type="component" value="Chromosome 1"/>
</dbReference>
<dbReference type="GO" id="GO:0101004">
    <property type="term" value="C:cytolytic granule membrane"/>
    <property type="evidence" value="ECO:0000250"/>
    <property type="project" value="UniProtKB"/>
</dbReference>
<dbReference type="GO" id="GO:0010008">
    <property type="term" value="C:endosome membrane"/>
    <property type="evidence" value="ECO:0000250"/>
    <property type="project" value="UniProtKB"/>
</dbReference>
<dbReference type="GO" id="GO:0031902">
    <property type="term" value="C:late endosome membrane"/>
    <property type="evidence" value="ECO:0007669"/>
    <property type="project" value="UniProtKB-SubCell"/>
</dbReference>
<dbReference type="GO" id="GO:0005765">
    <property type="term" value="C:lysosomal membrane"/>
    <property type="evidence" value="ECO:0000250"/>
    <property type="project" value="UniProtKB"/>
</dbReference>
<dbReference type="GO" id="GO:0005764">
    <property type="term" value="C:lysosome"/>
    <property type="evidence" value="ECO:0000314"/>
    <property type="project" value="MGI"/>
</dbReference>
<dbReference type="GO" id="GO:0005886">
    <property type="term" value="C:plasma membrane"/>
    <property type="evidence" value="ECO:0000250"/>
    <property type="project" value="UniProtKB"/>
</dbReference>
<dbReference type="GO" id="GO:0008200">
    <property type="term" value="F:ion channel inhibitor activity"/>
    <property type="evidence" value="ECO:0000250"/>
    <property type="project" value="UniProtKB"/>
</dbReference>
<dbReference type="GO" id="GO:0072594">
    <property type="term" value="P:establishment of protein localization to organelle"/>
    <property type="evidence" value="ECO:0007669"/>
    <property type="project" value="TreeGrafter"/>
</dbReference>
<dbReference type="GO" id="GO:0007042">
    <property type="term" value="P:lysosomal lumen acidification"/>
    <property type="evidence" value="ECO:0000250"/>
    <property type="project" value="UniProtKB"/>
</dbReference>
<dbReference type="GO" id="GO:0050821">
    <property type="term" value="P:protein stabilization"/>
    <property type="evidence" value="ECO:0000250"/>
    <property type="project" value="CAFA"/>
</dbReference>
<dbReference type="CDD" id="cd12087">
    <property type="entry name" value="TM_EGFR-like"/>
    <property type="match status" value="1"/>
</dbReference>
<dbReference type="FunFam" id="2.40.160.110:FF:000005">
    <property type="entry name" value="Lysosome-associated membrane glycoprotein 1"/>
    <property type="match status" value="1"/>
</dbReference>
<dbReference type="FunFam" id="2.40.160.110:FF:000001">
    <property type="entry name" value="lysosome-associated membrane glycoprotein 2 isoform X2"/>
    <property type="match status" value="1"/>
</dbReference>
<dbReference type="Gene3D" id="2.40.160.110">
    <property type="match status" value="2"/>
</dbReference>
<dbReference type="InterPro" id="IPR048528">
    <property type="entry name" value="Lamp2-like_luminal"/>
</dbReference>
<dbReference type="InterPro" id="IPR048524">
    <property type="entry name" value="Lamp2-like_TM"/>
</dbReference>
<dbReference type="InterPro" id="IPR018134">
    <property type="entry name" value="LAMP_CS"/>
</dbReference>
<dbReference type="InterPro" id="IPR002000">
    <property type="entry name" value="Lysosome-assoc_membr_glycop"/>
</dbReference>
<dbReference type="PANTHER" id="PTHR11506">
    <property type="entry name" value="LYSOSOME-ASSOCIATED MEMBRANE GLYCOPROTEIN"/>
    <property type="match status" value="1"/>
</dbReference>
<dbReference type="PANTHER" id="PTHR11506:SF35">
    <property type="entry name" value="LYSOSOME-ASSOCIATED MEMBRANE GLYCOPROTEIN 5"/>
    <property type="match status" value="1"/>
</dbReference>
<dbReference type="Pfam" id="PF01299">
    <property type="entry name" value="Lamp2-like_luminal"/>
    <property type="match status" value="2"/>
</dbReference>
<dbReference type="Pfam" id="PF21222">
    <property type="entry name" value="Lamp2_2nd"/>
    <property type="match status" value="1"/>
</dbReference>
<dbReference type="PRINTS" id="PR00336">
    <property type="entry name" value="LYSASSOCTDMP"/>
</dbReference>
<dbReference type="PROSITE" id="PS00310">
    <property type="entry name" value="LAMP_1"/>
    <property type="match status" value="2"/>
</dbReference>
<dbReference type="PROSITE" id="PS00311">
    <property type="entry name" value="LAMP_2"/>
    <property type="match status" value="1"/>
</dbReference>
<dbReference type="PROSITE" id="PS51407">
    <property type="entry name" value="LAMP_3"/>
    <property type="match status" value="1"/>
</dbReference>
<comment type="function">
    <text evidence="2">Lysosomal membrane glycoprotein which plays an important role in lysosome biogenesis, lysosomal pH regulation, autophagy and cholesterol homeostasis. Acts as an important regulator of lysosomal lumen pH regulation by acting as a direct inhibitor of the proton channel TMEM175, facilitating lysosomal acidification for optimal hydrolase activity. Also plays an important role in NK-cells cytotoxicity. Mechanistically, participates in cytotoxic granule movement to the cell surface and perforin trafficking to the lytic granule. In addition, protects NK-cells from degranulation-associated damage induced by their own cytotoxic granule content. Presents carbohydrate ligands to selectins.</text>
</comment>
<comment type="subunit">
    <text evidence="2">Interacts with ABCB9; this interaction strongly stabilizes ABCB9 and protects ABCB9 against lysosomal degradation. Interacts with FURIN. Interacts with TMEM175; inhibiting the proton channel activity of TMEM175.</text>
</comment>
<comment type="subcellular location">
    <subcellularLocation>
        <location evidence="2">Lysosome membrane</location>
        <topology evidence="4">Single-pass type I membrane protein</topology>
    </subcellularLocation>
    <subcellularLocation>
        <location evidence="2">Endosome membrane</location>
        <topology evidence="4">Single-pass type I membrane protein</topology>
    </subcellularLocation>
    <subcellularLocation>
        <location evidence="2">Late endosome membrane</location>
        <topology evidence="4">Single-pass type I membrane protein</topology>
    </subcellularLocation>
    <subcellularLocation>
        <location evidence="2">Cell membrane</location>
        <topology evidence="4">Single-pass type I membrane protein</topology>
    </subcellularLocation>
    <subcellularLocation>
        <location evidence="2">Cytolytic granule membrane</location>
        <topology evidence="4">Single-pass type I membrane protein</topology>
    </subcellularLocation>
    <text evidence="1 2">This protein shuttles between lysosomes, endosomes, and the plasma membrane (By similarity). Colocalizes with OSBPL1A at the late endosome (By similarity).</text>
</comment>
<comment type="PTM">
    <text evidence="2">O- and N-glycosylated; some of the N-glycans attached to LAMP-1 are polylactosaminoglycans.</text>
</comment>
<comment type="similarity">
    <text evidence="5">Belongs to the LAMP family.</text>
</comment>